<protein>
    <recommendedName>
        <fullName>Semaphorin-4E</fullName>
    </recommendedName>
    <alternativeName>
        <fullName>Semaphorin-7</fullName>
    </alternativeName>
    <alternativeName>
        <fullName>Semaphorin-Z7</fullName>
        <shortName>Sema Z7</shortName>
    </alternativeName>
</protein>
<accession>Q9YHX4</accession>
<organism>
    <name type="scientific">Danio rerio</name>
    <name type="common">Zebrafish</name>
    <name type="synonym">Brachydanio rerio</name>
    <dbReference type="NCBI Taxonomy" id="7955"/>
    <lineage>
        <taxon>Eukaryota</taxon>
        <taxon>Metazoa</taxon>
        <taxon>Chordata</taxon>
        <taxon>Craniata</taxon>
        <taxon>Vertebrata</taxon>
        <taxon>Euteleostomi</taxon>
        <taxon>Actinopterygii</taxon>
        <taxon>Neopterygii</taxon>
        <taxon>Teleostei</taxon>
        <taxon>Ostariophysi</taxon>
        <taxon>Cypriniformes</taxon>
        <taxon>Danionidae</taxon>
        <taxon>Danioninae</taxon>
        <taxon>Danio</taxon>
    </lineage>
</organism>
<feature type="signal peptide" evidence="2">
    <location>
        <begin position="1"/>
        <end position="24"/>
    </location>
</feature>
<feature type="chain" id="PRO_0000032329" description="Semaphorin-4E">
    <location>
        <begin position="25"/>
        <end position="766"/>
    </location>
</feature>
<feature type="topological domain" description="Extracellular" evidence="2">
    <location>
        <begin position="25"/>
        <end position="664"/>
    </location>
</feature>
<feature type="transmembrane region" description="Helical" evidence="2">
    <location>
        <begin position="665"/>
        <end position="685"/>
    </location>
</feature>
<feature type="topological domain" description="Cytoplasmic" evidence="2">
    <location>
        <begin position="686"/>
        <end position="766"/>
    </location>
</feature>
<feature type="domain" description="Sema" evidence="3">
    <location>
        <begin position="27"/>
        <end position="499"/>
    </location>
</feature>
<feature type="domain" description="PSI">
    <location>
        <begin position="501"/>
        <end position="552"/>
    </location>
</feature>
<feature type="domain" description="Ig-like C2-type">
    <location>
        <begin position="555"/>
        <end position="640"/>
    </location>
</feature>
<feature type="region of interest" description="Disordered" evidence="4">
    <location>
        <begin position="724"/>
        <end position="750"/>
    </location>
</feature>
<feature type="glycosylation site" description="N-linked (GlcNAc...) asparagine" evidence="2">
    <location>
        <position position="52"/>
    </location>
</feature>
<feature type="glycosylation site" description="N-linked (GlcNAc...) asparagine" evidence="2">
    <location>
        <position position="433"/>
    </location>
</feature>
<feature type="glycosylation site" description="N-linked (GlcNAc...) asparagine" evidence="2">
    <location>
        <position position="564"/>
    </location>
</feature>
<feature type="glycosylation site" description="N-linked (GlcNAc...) asparagine" evidence="2">
    <location>
        <position position="612"/>
    </location>
</feature>
<feature type="disulfide bond" evidence="1">
    <location>
        <begin position="100"/>
        <end position="111"/>
    </location>
</feature>
<feature type="disulfide bond" evidence="1">
    <location>
        <begin position="129"/>
        <end position="138"/>
    </location>
</feature>
<feature type="disulfide bond" evidence="1">
    <location>
        <begin position="261"/>
        <end position="373"/>
    </location>
</feature>
<feature type="disulfide bond" evidence="1">
    <location>
        <begin position="285"/>
        <end position="329"/>
    </location>
</feature>
<feature type="disulfide bond" evidence="1">
    <location>
        <begin position="502"/>
        <end position="519"/>
    </location>
</feature>
<feature type="disulfide bond" evidence="1">
    <location>
        <begin position="511"/>
        <end position="528"/>
    </location>
</feature>
<feature type="disulfide bond" evidence="1">
    <location>
        <begin position="577"/>
        <end position="623"/>
    </location>
</feature>
<name>SEM4E_DANRE</name>
<keyword id="KW-1015">Disulfide bond</keyword>
<keyword id="KW-0325">Glycoprotein</keyword>
<keyword id="KW-0393">Immunoglobulin domain</keyword>
<keyword id="KW-0472">Membrane</keyword>
<keyword id="KW-1185">Reference proteome</keyword>
<keyword id="KW-0732">Signal</keyword>
<keyword id="KW-0812">Transmembrane</keyword>
<keyword id="KW-1133">Transmembrane helix</keyword>
<reference key="1">
    <citation type="journal article" date="1998" name="Mech. Dev.">
        <title>Molecular cloning and expression of two novel zebrafish semaphorins.</title>
        <authorList>
            <person name="Halloran M.C."/>
            <person name="Severance S.M."/>
            <person name="Yee C.S."/>
            <person name="Gemza D.L."/>
            <person name="Kuwada J.Y."/>
        </authorList>
    </citation>
    <scope>NUCLEOTIDE SEQUENCE [MRNA]</scope>
</reference>
<comment type="subcellular location">
    <subcellularLocation>
        <location>Membrane</location>
        <topology>Single-pass type I membrane protein</topology>
    </subcellularLocation>
</comment>
<comment type="similarity">
    <text evidence="5">Belongs to the semaphorin family.</text>
</comment>
<evidence type="ECO:0000250" key="1"/>
<evidence type="ECO:0000255" key="2"/>
<evidence type="ECO:0000255" key="3">
    <source>
        <dbReference type="PROSITE-ProRule" id="PRU00352"/>
    </source>
</evidence>
<evidence type="ECO:0000256" key="4">
    <source>
        <dbReference type="SAM" id="MobiDB-lite"/>
    </source>
</evidence>
<evidence type="ECO:0000305" key="5"/>
<gene>
    <name type="primary">sema4e</name>
    <name type="synonym">sema7</name>
    <name type="synonym">semaz7</name>
</gene>
<sequence>MMSLLAVLCVLYVWSPAMLTGGLGSTLDSLPRKTVPIGSNGGRLFREEGIWNYTTMLLRDDLNLLILGAREAIFALDLDDITIKKAMLKWEVTRDQQNDCSNKGKDATNDCKNYIRILHKKNDGRMYVCGTKAFNPTCGYLSYADGKLTLEILQEDTKGKCPFDPFQRYTSAMVDGAYYSATSMNFRGSEPVMMRSTEESIRTEFTSTWLSEPNFIHMAHIPEGQSNPDGDDDKIYLFFSETAVEYESYTKVDVSRVARVCKGDLGGQRTLQKKWTSFLKARLDCQVPNTNLPLLVQDVFHLCPDDWTTCVFYAVFTPQSDSSQYSAVCSYKIEDIKTVFSKGKFKAPFNVETSFVKWVMYSGELPDPRPGACIDNHAREKGITKSLELPDKTLQFVKDKPLMDQAVTAEQPLLVKRGAAFTRIVVTTATALNGTSHQVMFIGTKSGSVLKAVNYNGEMVIMEEIQLFDPSEPIKILRLSSSKKQLYVGSEVGVVQLSISECGRYQTCLDCVLARDPHCGWDLDTEHCATINSIHRTRSSTVIQSLNDGDASQCPAIGVSKPVNISFYHGNTVKLGCQPYSNLAQVKWQFNGEPIKPSNTIQILSDGLMIFNASLDATGYYTCSSIETVSQRKYQTQHVAYDVKMWSESGTTASLHHVKEKERTLVAMVVILSLVLAALLIWNLYKGHLSLPCLHRRVKATQNRHEDDANQVQPQRLASSVVNFNSNNNHANDQRYSSSRETDRLSTTAGSTGQMSLKYIDDESEI</sequence>
<dbReference type="EMBL" id="AF073289">
    <property type="protein sequence ID" value="AAC72345.1"/>
    <property type="molecule type" value="mRNA"/>
</dbReference>
<dbReference type="RefSeq" id="NP_571124.1">
    <property type="nucleotide sequence ID" value="NM_131049.1"/>
</dbReference>
<dbReference type="SMR" id="Q9YHX4"/>
<dbReference type="FunCoup" id="Q9YHX4">
    <property type="interactions" value="1"/>
</dbReference>
<dbReference type="STRING" id="7955.ENSDARP00000101012"/>
<dbReference type="GlyCosmos" id="Q9YHX4">
    <property type="glycosylation" value="4 sites, No reported glycans"/>
</dbReference>
<dbReference type="PaxDb" id="7955-ENSDARP00000056251"/>
<dbReference type="GeneID" id="796377"/>
<dbReference type="KEGG" id="dre:796377"/>
<dbReference type="AGR" id="ZFIN:ZDB-GENE-990715-7"/>
<dbReference type="CTD" id="796377"/>
<dbReference type="ZFIN" id="ZDB-GENE-990715-7">
    <property type="gene designation" value="sema4e"/>
</dbReference>
<dbReference type="eggNOG" id="KOG3611">
    <property type="taxonomic scope" value="Eukaryota"/>
</dbReference>
<dbReference type="InParanoid" id="Q9YHX4"/>
<dbReference type="OrthoDB" id="9988752at2759"/>
<dbReference type="PhylomeDB" id="Q9YHX4"/>
<dbReference type="PRO" id="PR:Q9YHX4"/>
<dbReference type="Proteomes" id="UP000000437">
    <property type="component" value="Chromosome 2"/>
</dbReference>
<dbReference type="GO" id="GO:0005615">
    <property type="term" value="C:extracellular space"/>
    <property type="evidence" value="ECO:0000318"/>
    <property type="project" value="GO_Central"/>
</dbReference>
<dbReference type="GO" id="GO:0005886">
    <property type="term" value="C:plasma membrane"/>
    <property type="evidence" value="ECO:0000318"/>
    <property type="project" value="GO_Central"/>
</dbReference>
<dbReference type="GO" id="GO:0045499">
    <property type="term" value="F:chemorepellent activity"/>
    <property type="evidence" value="ECO:0000318"/>
    <property type="project" value="GO_Central"/>
</dbReference>
<dbReference type="GO" id="GO:0038191">
    <property type="term" value="F:neuropilin binding"/>
    <property type="evidence" value="ECO:0000318"/>
    <property type="project" value="GO_Central"/>
</dbReference>
<dbReference type="GO" id="GO:0030215">
    <property type="term" value="F:semaphorin receptor binding"/>
    <property type="evidence" value="ECO:0000318"/>
    <property type="project" value="GO_Central"/>
</dbReference>
<dbReference type="GO" id="GO:0007411">
    <property type="term" value="P:axon guidance"/>
    <property type="evidence" value="ECO:0000318"/>
    <property type="project" value="GO_Central"/>
</dbReference>
<dbReference type="GO" id="GO:0050919">
    <property type="term" value="P:negative chemotaxis"/>
    <property type="evidence" value="ECO:0000318"/>
    <property type="project" value="GO_Central"/>
</dbReference>
<dbReference type="GO" id="GO:0001755">
    <property type="term" value="P:neural crest cell migration"/>
    <property type="evidence" value="ECO:0000318"/>
    <property type="project" value="GO_Central"/>
</dbReference>
<dbReference type="GO" id="GO:0030335">
    <property type="term" value="P:positive regulation of cell migration"/>
    <property type="evidence" value="ECO:0000318"/>
    <property type="project" value="GO_Central"/>
</dbReference>
<dbReference type="GO" id="GO:0071526">
    <property type="term" value="P:semaphorin-plexin signaling pathway"/>
    <property type="evidence" value="ECO:0000318"/>
    <property type="project" value="GO_Central"/>
</dbReference>
<dbReference type="CDD" id="cd11260">
    <property type="entry name" value="Sema_4E"/>
    <property type="match status" value="1"/>
</dbReference>
<dbReference type="FunFam" id="2.60.40.10:FF:003272">
    <property type="match status" value="1"/>
</dbReference>
<dbReference type="FunFam" id="2.130.10.10:FF:001158">
    <property type="entry name" value="Semaphorin-4E"/>
    <property type="match status" value="1"/>
</dbReference>
<dbReference type="Gene3D" id="2.60.40.10">
    <property type="entry name" value="Immunoglobulins"/>
    <property type="match status" value="1"/>
</dbReference>
<dbReference type="Gene3D" id="3.30.1680.10">
    <property type="entry name" value="ligand-binding face of the semaphorins, domain 2"/>
    <property type="match status" value="1"/>
</dbReference>
<dbReference type="Gene3D" id="2.130.10.10">
    <property type="entry name" value="YVTN repeat-like/Quinoprotein amine dehydrogenase"/>
    <property type="match status" value="1"/>
</dbReference>
<dbReference type="InterPro" id="IPR007110">
    <property type="entry name" value="Ig-like_dom"/>
</dbReference>
<dbReference type="InterPro" id="IPR036179">
    <property type="entry name" value="Ig-like_dom_sf"/>
</dbReference>
<dbReference type="InterPro" id="IPR013783">
    <property type="entry name" value="Ig-like_fold"/>
</dbReference>
<dbReference type="InterPro" id="IPR013098">
    <property type="entry name" value="Ig_I-set"/>
</dbReference>
<dbReference type="InterPro" id="IPR002165">
    <property type="entry name" value="Plexin_repeat"/>
</dbReference>
<dbReference type="InterPro" id="IPR016201">
    <property type="entry name" value="PSI"/>
</dbReference>
<dbReference type="InterPro" id="IPR001627">
    <property type="entry name" value="Semap_dom"/>
</dbReference>
<dbReference type="InterPro" id="IPR036352">
    <property type="entry name" value="Semap_dom_sf"/>
</dbReference>
<dbReference type="InterPro" id="IPR027231">
    <property type="entry name" value="Semaphorin"/>
</dbReference>
<dbReference type="InterPro" id="IPR015943">
    <property type="entry name" value="WD40/YVTN_repeat-like_dom_sf"/>
</dbReference>
<dbReference type="PANTHER" id="PTHR11036">
    <property type="entry name" value="SEMAPHORIN"/>
    <property type="match status" value="1"/>
</dbReference>
<dbReference type="PANTHER" id="PTHR11036:SF135">
    <property type="entry name" value="SEMAPHORIN 4D ISOFORM X1-RELATED"/>
    <property type="match status" value="1"/>
</dbReference>
<dbReference type="Pfam" id="PF07679">
    <property type="entry name" value="I-set"/>
    <property type="match status" value="1"/>
</dbReference>
<dbReference type="Pfam" id="PF01437">
    <property type="entry name" value="PSI"/>
    <property type="match status" value="1"/>
</dbReference>
<dbReference type="Pfam" id="PF01403">
    <property type="entry name" value="Sema"/>
    <property type="match status" value="1"/>
</dbReference>
<dbReference type="SMART" id="SM00423">
    <property type="entry name" value="PSI"/>
    <property type="match status" value="1"/>
</dbReference>
<dbReference type="SMART" id="SM00630">
    <property type="entry name" value="Sema"/>
    <property type="match status" value="1"/>
</dbReference>
<dbReference type="SUPFAM" id="SSF48726">
    <property type="entry name" value="Immunoglobulin"/>
    <property type="match status" value="1"/>
</dbReference>
<dbReference type="SUPFAM" id="SSF103575">
    <property type="entry name" value="Plexin repeat"/>
    <property type="match status" value="1"/>
</dbReference>
<dbReference type="SUPFAM" id="SSF101912">
    <property type="entry name" value="Sema domain"/>
    <property type="match status" value="1"/>
</dbReference>
<dbReference type="PROSITE" id="PS50835">
    <property type="entry name" value="IG_LIKE"/>
    <property type="match status" value="1"/>
</dbReference>
<dbReference type="PROSITE" id="PS51004">
    <property type="entry name" value="SEMA"/>
    <property type="match status" value="1"/>
</dbReference>
<proteinExistence type="evidence at transcript level"/>